<name>NELL1_HUMAN</name>
<reference key="1">
    <citation type="journal article" date="1996" name="Genomics">
        <title>Cloning and characterization of two novel human cDNAs (NELL1 and NELL2) encoding proteins with six EGF-like repeats.</title>
        <authorList>
            <person name="Watanabe T.K."/>
            <person name="Katagiri T."/>
            <person name="Suzuki M."/>
            <person name="Shimizu F."/>
            <person name="Fujiwara T."/>
            <person name="Kanemoto N."/>
            <person name="Nakamura Y."/>
            <person name="Hirai Y."/>
            <person name="Maekawa H."/>
            <person name="Takahashi E."/>
        </authorList>
    </citation>
    <scope>NUCLEOTIDE SEQUENCE [MRNA] (ISOFORM 1)</scope>
    <scope>VARIANT GLN-82</scope>
    <source>
        <tissue>Brain</tissue>
    </source>
</reference>
<reference key="2">
    <citation type="journal article" date="2004" name="Nat. Genet.">
        <title>Complete sequencing and characterization of 21,243 full-length human cDNAs.</title>
        <authorList>
            <person name="Ota T."/>
            <person name="Suzuki Y."/>
            <person name="Nishikawa T."/>
            <person name="Otsuki T."/>
            <person name="Sugiyama T."/>
            <person name="Irie R."/>
            <person name="Wakamatsu A."/>
            <person name="Hayashi K."/>
            <person name="Sato H."/>
            <person name="Nagai K."/>
            <person name="Kimura K."/>
            <person name="Makita H."/>
            <person name="Sekine M."/>
            <person name="Obayashi M."/>
            <person name="Nishi T."/>
            <person name="Shibahara T."/>
            <person name="Tanaka T."/>
            <person name="Ishii S."/>
            <person name="Yamamoto J."/>
            <person name="Saito K."/>
            <person name="Kawai Y."/>
            <person name="Isono Y."/>
            <person name="Nakamura Y."/>
            <person name="Nagahari K."/>
            <person name="Murakami K."/>
            <person name="Yasuda T."/>
            <person name="Iwayanagi T."/>
            <person name="Wagatsuma M."/>
            <person name="Shiratori A."/>
            <person name="Sudo H."/>
            <person name="Hosoiri T."/>
            <person name="Kaku Y."/>
            <person name="Kodaira H."/>
            <person name="Kondo H."/>
            <person name="Sugawara M."/>
            <person name="Takahashi M."/>
            <person name="Kanda K."/>
            <person name="Yokoi T."/>
            <person name="Furuya T."/>
            <person name="Kikkawa E."/>
            <person name="Omura Y."/>
            <person name="Abe K."/>
            <person name="Kamihara K."/>
            <person name="Katsuta N."/>
            <person name="Sato K."/>
            <person name="Tanikawa M."/>
            <person name="Yamazaki M."/>
            <person name="Ninomiya K."/>
            <person name="Ishibashi T."/>
            <person name="Yamashita H."/>
            <person name="Murakawa K."/>
            <person name="Fujimori K."/>
            <person name="Tanai H."/>
            <person name="Kimata M."/>
            <person name="Watanabe M."/>
            <person name="Hiraoka S."/>
            <person name="Chiba Y."/>
            <person name="Ishida S."/>
            <person name="Ono Y."/>
            <person name="Takiguchi S."/>
            <person name="Watanabe S."/>
            <person name="Yosida M."/>
            <person name="Hotuta T."/>
            <person name="Kusano J."/>
            <person name="Kanehori K."/>
            <person name="Takahashi-Fujii A."/>
            <person name="Hara H."/>
            <person name="Tanase T.-O."/>
            <person name="Nomura Y."/>
            <person name="Togiya S."/>
            <person name="Komai F."/>
            <person name="Hara R."/>
            <person name="Takeuchi K."/>
            <person name="Arita M."/>
            <person name="Imose N."/>
            <person name="Musashino K."/>
            <person name="Yuuki H."/>
            <person name="Oshima A."/>
            <person name="Sasaki N."/>
            <person name="Aotsuka S."/>
            <person name="Yoshikawa Y."/>
            <person name="Matsunawa H."/>
            <person name="Ichihara T."/>
            <person name="Shiohata N."/>
            <person name="Sano S."/>
            <person name="Moriya S."/>
            <person name="Momiyama H."/>
            <person name="Satoh N."/>
            <person name="Takami S."/>
            <person name="Terashima Y."/>
            <person name="Suzuki O."/>
            <person name="Nakagawa S."/>
            <person name="Senoh A."/>
            <person name="Mizoguchi H."/>
            <person name="Goto Y."/>
            <person name="Shimizu F."/>
            <person name="Wakebe H."/>
            <person name="Hishigaki H."/>
            <person name="Watanabe T."/>
            <person name="Sugiyama A."/>
            <person name="Takemoto M."/>
            <person name="Kawakami B."/>
            <person name="Yamazaki M."/>
            <person name="Watanabe K."/>
            <person name="Kumagai A."/>
            <person name="Itakura S."/>
            <person name="Fukuzumi Y."/>
            <person name="Fujimori Y."/>
            <person name="Komiyama M."/>
            <person name="Tashiro H."/>
            <person name="Tanigami A."/>
            <person name="Fujiwara T."/>
            <person name="Ono T."/>
            <person name="Yamada K."/>
            <person name="Fujii Y."/>
            <person name="Ozaki K."/>
            <person name="Hirao M."/>
            <person name="Ohmori Y."/>
            <person name="Kawabata A."/>
            <person name="Hikiji T."/>
            <person name="Kobatake N."/>
            <person name="Inagaki H."/>
            <person name="Ikema Y."/>
            <person name="Okamoto S."/>
            <person name="Okitani R."/>
            <person name="Kawakami T."/>
            <person name="Noguchi S."/>
            <person name="Itoh T."/>
            <person name="Shigeta K."/>
            <person name="Senba T."/>
            <person name="Matsumura K."/>
            <person name="Nakajima Y."/>
            <person name="Mizuno T."/>
            <person name="Morinaga M."/>
            <person name="Sasaki M."/>
            <person name="Togashi T."/>
            <person name="Oyama M."/>
            <person name="Hata H."/>
            <person name="Watanabe M."/>
            <person name="Komatsu T."/>
            <person name="Mizushima-Sugano J."/>
            <person name="Satoh T."/>
            <person name="Shirai Y."/>
            <person name="Takahashi Y."/>
            <person name="Nakagawa K."/>
            <person name="Okumura K."/>
            <person name="Nagase T."/>
            <person name="Nomura N."/>
            <person name="Kikuchi H."/>
            <person name="Masuho Y."/>
            <person name="Yamashita R."/>
            <person name="Nakai K."/>
            <person name="Yada T."/>
            <person name="Nakamura Y."/>
            <person name="Ohara O."/>
            <person name="Isogai T."/>
            <person name="Sugano S."/>
        </authorList>
    </citation>
    <scope>NUCLEOTIDE SEQUENCE [LARGE SCALE MRNA] (ISOFORM 1)</scope>
    <scope>VARIANT GLN-82</scope>
    <source>
        <tissue>Amygdala</tissue>
    </source>
</reference>
<reference key="3">
    <citation type="submission" date="2008-02" db="EMBL/GenBank/DDBJ databases">
        <authorList>
            <consortium name="NIEHS SNPs program"/>
        </authorList>
    </citation>
    <scope>NUCLEOTIDE SEQUENCE [GENOMIC DNA]</scope>
    <scope>VARIANT GLN-82</scope>
</reference>
<reference key="4">
    <citation type="journal article" date="2006" name="Nature">
        <title>Human chromosome 11 DNA sequence and analysis including novel gene identification.</title>
        <authorList>
            <person name="Taylor T.D."/>
            <person name="Noguchi H."/>
            <person name="Totoki Y."/>
            <person name="Toyoda A."/>
            <person name="Kuroki Y."/>
            <person name="Dewar K."/>
            <person name="Lloyd C."/>
            <person name="Itoh T."/>
            <person name="Takeda T."/>
            <person name="Kim D.-W."/>
            <person name="She X."/>
            <person name="Barlow K.F."/>
            <person name="Bloom T."/>
            <person name="Bruford E."/>
            <person name="Chang J.L."/>
            <person name="Cuomo C.A."/>
            <person name="Eichler E."/>
            <person name="FitzGerald M.G."/>
            <person name="Jaffe D.B."/>
            <person name="LaButti K."/>
            <person name="Nicol R."/>
            <person name="Park H.-S."/>
            <person name="Seaman C."/>
            <person name="Sougnez C."/>
            <person name="Yang X."/>
            <person name="Zimmer A.R."/>
            <person name="Zody M.C."/>
            <person name="Birren B.W."/>
            <person name="Nusbaum C."/>
            <person name="Fujiyama A."/>
            <person name="Hattori M."/>
            <person name="Rogers J."/>
            <person name="Lander E.S."/>
            <person name="Sakaki Y."/>
        </authorList>
    </citation>
    <scope>NUCLEOTIDE SEQUENCE [LARGE SCALE GENOMIC DNA]</scope>
</reference>
<reference key="5">
    <citation type="submission" date="2005-09" db="EMBL/GenBank/DDBJ databases">
        <authorList>
            <person name="Mural R.J."/>
            <person name="Istrail S."/>
            <person name="Sutton G.G."/>
            <person name="Florea L."/>
            <person name="Halpern A.L."/>
            <person name="Mobarry C.M."/>
            <person name="Lippert R."/>
            <person name="Walenz B."/>
            <person name="Shatkay H."/>
            <person name="Dew I."/>
            <person name="Miller J.R."/>
            <person name="Flanigan M.J."/>
            <person name="Edwards N.J."/>
            <person name="Bolanos R."/>
            <person name="Fasulo D."/>
            <person name="Halldorsson B.V."/>
            <person name="Hannenhalli S."/>
            <person name="Turner R."/>
            <person name="Yooseph S."/>
            <person name="Lu F."/>
            <person name="Nusskern D.R."/>
            <person name="Shue B.C."/>
            <person name="Zheng X.H."/>
            <person name="Zhong F."/>
            <person name="Delcher A.L."/>
            <person name="Huson D.H."/>
            <person name="Kravitz S.A."/>
            <person name="Mouchard L."/>
            <person name="Reinert K."/>
            <person name="Remington K.A."/>
            <person name="Clark A.G."/>
            <person name="Waterman M.S."/>
            <person name="Eichler E.E."/>
            <person name="Adams M.D."/>
            <person name="Hunkapiller M.W."/>
            <person name="Myers E.W."/>
            <person name="Venter J.C."/>
        </authorList>
    </citation>
    <scope>NUCLEOTIDE SEQUENCE [LARGE SCALE GENOMIC DNA]</scope>
</reference>
<reference key="6">
    <citation type="journal article" date="2004" name="Genome Res.">
        <title>The status, quality, and expansion of the NIH full-length cDNA project: the Mammalian Gene Collection (MGC).</title>
        <authorList>
            <consortium name="The MGC Project Team"/>
        </authorList>
    </citation>
    <scope>NUCLEOTIDE SEQUENCE [LARGE SCALE MRNA] (ISOFORMS 1 AND 2)</scope>
    <scope>VARIANT GLN-82</scope>
</reference>
<reference key="7">
    <citation type="submission" date="1996-09" db="EMBL/GenBank/DDBJ databases">
        <title>Nel homolog gene expression in craniofacial anomalies.</title>
        <authorList>
            <person name="Ting K."/>
            <person name="Vastardis H."/>
            <person name="Mulliken J.B."/>
            <person name="Bertolami C."/>
            <person name="Wen Z."/>
            <person name="Young M."/>
            <person name="Tieu A."/>
            <person name="Kwong E."/>
        </authorList>
    </citation>
    <scope>NUCLEOTIDE SEQUENCE [MRNA] OF 383-810 (ISOFORMS 1/2)</scope>
</reference>
<reference key="8">
    <citation type="journal article" date="2011" name="FEBS Lett.">
        <title>NELL-1 binds to APR3 affecting human osteoblast proliferation and differentiation.</title>
        <authorList>
            <person name="Zou X."/>
            <person name="Shen J."/>
            <person name="Chen F."/>
            <person name="Ting K."/>
            <person name="Zheng Z."/>
            <person name="Pang S."/>
            <person name="Zara J.N."/>
            <person name="Adams J.S."/>
            <person name="Soo C."/>
            <person name="Zhang X."/>
        </authorList>
    </citation>
    <scope>FUNCTION IN OSTEOBLAST DIFFERENTIATION</scope>
    <scope>INTERACTION WITH ATRAID</scope>
    <scope>SUBCELLULAR LOCATION</scope>
</reference>
<reference key="9">
    <citation type="journal article" date="2006" name="Science">
        <title>The consensus coding sequences of human breast and colorectal cancers.</title>
        <authorList>
            <person name="Sjoeblom T."/>
            <person name="Jones S."/>
            <person name="Wood L.D."/>
            <person name="Parsons D.W."/>
            <person name="Lin J."/>
            <person name="Barber T.D."/>
            <person name="Mandelker D."/>
            <person name="Leary R.J."/>
            <person name="Ptak J."/>
            <person name="Silliman N."/>
            <person name="Szabo S."/>
            <person name="Buckhaults P."/>
            <person name="Farrell C."/>
            <person name="Meeh P."/>
            <person name="Markowitz S.D."/>
            <person name="Willis J."/>
            <person name="Dawson D."/>
            <person name="Willson J.K.V."/>
            <person name="Gazdar A.F."/>
            <person name="Hartigan J."/>
            <person name="Wu L."/>
            <person name="Liu C."/>
            <person name="Parmigiani G."/>
            <person name="Park B.H."/>
            <person name="Bachman K.E."/>
            <person name="Papadopoulos N."/>
            <person name="Vogelstein B."/>
            <person name="Kinzler K.W."/>
            <person name="Velculescu V.E."/>
        </authorList>
    </citation>
    <scope>VARIANT [LARGE SCALE ANALYSIS] PHE-553</scope>
</reference>
<reference evidence="14" key="10">
    <citation type="journal article" date="2020" name="Nat. Commun.">
        <title>NELL2-Robo3 complex structure reveals mechanisms of receptor activation for axon guidance.</title>
        <authorList>
            <person name="Pak J.S."/>
            <person name="DeLoughery Z.J."/>
            <person name="Wang J."/>
            <person name="Acharya N."/>
            <person name="Park Y."/>
            <person name="Jaworski A."/>
            <person name="Ozkan E."/>
        </authorList>
    </citation>
    <scope>X-RAY CRYSTALLOGRAPHY (1.80 ANGSTROMS) OF 390-517 IN COMPLEX WITH ROBO3</scope>
    <scope>DISULFIDE BOND</scope>
    <scope>CALCIUM-BINDING</scope>
    <scope>GLYCOSYLATION AT ASN-511</scope>
</reference>
<gene>
    <name type="primary">NELL1</name>
    <name type="synonym">NRP1</name>
</gene>
<comment type="function">
    <text evidence="8">Plays a role in the control of cell growth and differentiation. Promotes osteoblast cell differentiation and terminal mineralization.</text>
</comment>
<comment type="subunit">
    <text evidence="1 8 9">Homotrimer (By similarity). Binds to PKC beta-1 (By similarity). Interacts with ATRAID; the interaction promotes osteoblast cell differentiation and mineralization (PubMed:21723284). Interacts with ROBO3 (PubMed:32198364).</text>
</comment>
<comment type="interaction">
    <interactant intactId="EBI-947754">
        <id>Q92832</id>
    </interactant>
    <interactant intactId="EBI-723802">
        <id>Q6UW56</id>
        <label>ATRAID</label>
    </interactant>
    <organismsDiffer>false</organismsDiffer>
    <experiments>4</experiments>
</comment>
<comment type="interaction">
    <interactant intactId="EBI-947754">
        <id>Q92832</id>
    </interactant>
    <interactant intactId="EBI-16439278">
        <id>Q6FHY5</id>
        <label>MEOX2</label>
    </interactant>
    <organismsDiffer>false</organismsDiffer>
    <experiments>3</experiments>
</comment>
<comment type="subcellular location">
    <subcellularLocation>
        <location evidence="8">Cytoplasm</location>
    </subcellularLocation>
    <subcellularLocation>
        <location evidence="8">Nucleus envelope</location>
    </subcellularLocation>
    <subcellularLocation>
        <location evidence="1">Secreted</location>
    </subcellularLocation>
    <text>Colocalizes with ATRAID on the nuclear envelope and the perinuclear region.</text>
</comment>
<comment type="alternative products">
    <event type="alternative splicing"/>
    <isoform>
        <id>Q92832-1</id>
        <name>1</name>
        <sequence type="displayed"/>
    </isoform>
    <isoform>
        <id>Q92832-2</id>
        <name>2</name>
        <sequence type="described" ref="VSP_039954"/>
    </isoform>
</comment>
<comment type="miscellaneous">
    <text evidence="9">It has been demonstrated that ROBO3 binds to both NELL1 and NELL2. However, NELL1 is not expressed in the spinal cord at the time of commissural axon growth to the midline and has no significant effect on commissural axon repulsion in vitro, suggesting that NELL1 is not a functional ligand for ROBO3 in commissural axons. It remains possible, however, that NELL1 functions as a ligand for ROBO3 at another spatiotemporal location.</text>
</comment>
<comment type="sequence caution" evidence="13">
    <conflict type="frameshift">
        <sequence resource="EMBL-CDS" id="AAB06946"/>
    </conflict>
</comment>
<protein>
    <recommendedName>
        <fullName>Protein kinase C-binding protein NELL1</fullName>
    </recommendedName>
    <alternativeName>
        <fullName>NEL-like protein 1</fullName>
    </alternativeName>
    <alternativeName>
        <fullName>Nel-related protein 1</fullName>
    </alternativeName>
</protein>
<feature type="signal peptide" evidence="2">
    <location>
        <begin position="1"/>
        <end position="21"/>
    </location>
</feature>
<feature type="chain" id="PRO_0000007664" description="Protein kinase C-binding protein NELL1">
    <location>
        <begin position="22"/>
        <end position="810"/>
    </location>
</feature>
<feature type="domain" description="Laminin G-like">
    <location>
        <begin position="64"/>
        <end position="227"/>
    </location>
</feature>
<feature type="domain" description="VWFC 1" evidence="4">
    <location>
        <begin position="271"/>
        <end position="332"/>
    </location>
</feature>
<feature type="domain" description="EGF-like 1; calcium-binding" evidence="3">
    <location>
        <begin position="434"/>
        <end position="475"/>
    </location>
</feature>
<feature type="domain" description="EGF-like 2; calcium-binding" evidence="3">
    <location>
        <begin position="476"/>
        <end position="516"/>
    </location>
</feature>
<feature type="domain" description="EGF-like 3" evidence="3">
    <location>
        <begin position="517"/>
        <end position="547"/>
    </location>
</feature>
<feature type="domain" description="EGF-like 4; calcium-binding" evidence="3">
    <location>
        <begin position="549"/>
        <end position="587"/>
    </location>
</feature>
<feature type="domain" description="EGF-like 5; calcium-binding" evidence="3">
    <location>
        <begin position="596"/>
        <end position="631"/>
    </location>
</feature>
<feature type="domain" description="VWFC 2" evidence="4">
    <location>
        <begin position="692"/>
        <end position="750"/>
    </location>
</feature>
<feature type="binding site" evidence="9 14">
    <location>
        <position position="434"/>
    </location>
    <ligand>
        <name>Ca(2+)</name>
        <dbReference type="ChEBI" id="CHEBI:29108"/>
    </ligand>
</feature>
<feature type="binding site" evidence="9 14">
    <location>
        <position position="435"/>
    </location>
    <ligand>
        <name>Ca(2+)</name>
        <dbReference type="ChEBI" id="CHEBI:29108"/>
    </ligand>
</feature>
<feature type="binding site" evidence="9 14">
    <location>
        <position position="437"/>
    </location>
    <ligand>
        <name>Ca(2+)</name>
        <dbReference type="ChEBI" id="CHEBI:29108"/>
    </ligand>
</feature>
<feature type="binding site" evidence="9 14">
    <location>
        <position position="453"/>
    </location>
    <ligand>
        <name>Ca(2+)</name>
        <dbReference type="ChEBI" id="CHEBI:29108"/>
    </ligand>
</feature>
<feature type="binding site" evidence="9 14">
    <location>
        <position position="454"/>
    </location>
    <ligand>
        <name>Ca(2+)</name>
        <dbReference type="ChEBI" id="CHEBI:29108"/>
    </ligand>
</feature>
<feature type="binding site" evidence="9 14">
    <location>
        <position position="457"/>
    </location>
    <ligand>
        <name>Ca(2+)</name>
        <dbReference type="ChEBI" id="CHEBI:29108"/>
    </ligand>
</feature>
<feature type="glycosylation site" description="N-linked (GlcNAc...) asparagine" evidence="2">
    <location>
        <position position="40"/>
    </location>
</feature>
<feature type="glycosylation site" description="N-linked (GlcNAc...) asparagine" evidence="2">
    <location>
        <position position="53"/>
    </location>
</feature>
<feature type="glycosylation site" description="N-linked (GlcNAc...) asparagine" evidence="2">
    <location>
        <position position="83"/>
    </location>
</feature>
<feature type="glycosylation site" description="N-linked (GlcNAc...) asparagine" evidence="2">
    <location>
        <position position="224"/>
    </location>
</feature>
<feature type="glycosylation site" description="N-linked (GlcNAc...) asparagine" evidence="2">
    <location>
        <position position="294"/>
    </location>
</feature>
<feature type="glycosylation site" description="N-linked (GlcNAc...) asparagine" evidence="2">
    <location>
        <position position="372"/>
    </location>
</feature>
<feature type="glycosylation site" description="N-linked (GlcNAc...) asparagine" evidence="9 14">
    <location>
        <position position="511"/>
    </location>
</feature>
<feature type="glycosylation site" description="N-linked (GlcNAc...) asparagine" evidence="2">
    <location>
        <position position="562"/>
    </location>
</feature>
<feature type="glycosylation site" description="N-linked (GlcNAc...) asparagine" evidence="2">
    <location>
        <position position="609"/>
    </location>
</feature>
<feature type="glycosylation site" description="N-linked (GlcNAc...) asparagine" evidence="2">
    <location>
        <position position="708"/>
    </location>
</feature>
<feature type="glycosylation site" description="N-linked (GlcNAc...) asparagine" evidence="2">
    <location>
        <position position="732"/>
    </location>
</feature>
<feature type="glycosylation site" description="N-linked (GlcNAc...) asparagine" evidence="2">
    <location>
        <position position="758"/>
    </location>
</feature>
<feature type="disulfide bond" evidence="9 14">
    <location>
        <begin position="395"/>
        <end position="407"/>
    </location>
</feature>
<feature type="disulfide bond" evidence="9 14">
    <location>
        <begin position="401"/>
        <end position="416"/>
    </location>
</feature>
<feature type="disulfide bond" evidence="9 14">
    <location>
        <begin position="418"/>
        <end position="432"/>
    </location>
</feature>
<feature type="disulfide bond" evidence="9 14">
    <location>
        <begin position="438"/>
        <end position="451"/>
    </location>
</feature>
<feature type="disulfide bond" evidence="9 14">
    <location>
        <begin position="445"/>
        <end position="460"/>
    </location>
</feature>
<feature type="disulfide bond" evidence="9 14">
    <location>
        <begin position="462"/>
        <end position="474"/>
    </location>
</feature>
<feature type="disulfide bond" evidence="9 14">
    <location>
        <begin position="480"/>
        <end position="493"/>
    </location>
</feature>
<feature type="disulfide bond" evidence="9 14">
    <location>
        <begin position="487"/>
        <end position="502"/>
    </location>
</feature>
<feature type="disulfide bond" evidence="9 14">
    <location>
        <begin position="504"/>
        <end position="515"/>
    </location>
</feature>
<feature type="disulfide bond" evidence="3">
    <location>
        <begin position="519"/>
        <end position="529"/>
    </location>
</feature>
<feature type="disulfide bond" evidence="3">
    <location>
        <begin position="523"/>
        <end position="535"/>
    </location>
</feature>
<feature type="disulfide bond" evidence="3">
    <location>
        <begin position="537"/>
        <end position="546"/>
    </location>
</feature>
<feature type="disulfide bond" evidence="3">
    <location>
        <begin position="553"/>
        <end position="566"/>
    </location>
</feature>
<feature type="disulfide bond" evidence="3">
    <location>
        <begin position="560"/>
        <end position="575"/>
    </location>
</feature>
<feature type="disulfide bond" evidence="3">
    <location>
        <begin position="577"/>
        <end position="594"/>
    </location>
</feature>
<feature type="disulfide bond" evidence="3">
    <location>
        <begin position="600"/>
        <end position="613"/>
    </location>
</feature>
<feature type="disulfide bond" evidence="3">
    <location>
        <begin position="607"/>
        <end position="622"/>
    </location>
</feature>
<feature type="disulfide bond" evidence="3">
    <location>
        <begin position="624"/>
        <end position="630"/>
    </location>
</feature>
<feature type="splice variant" id="VSP_039954" description="In isoform 2." evidence="12">
    <location>
        <begin position="549"/>
        <end position="595"/>
    </location>
</feature>
<feature type="sequence variant" id="VAR_047828" description="In dbSNP:rs8176785." evidence="5 6 10 11">
    <original>R</original>
    <variation>Q</variation>
    <location>
        <position position="82"/>
    </location>
</feature>
<feature type="sequence variant" id="VAR_047829" description="In dbSNP:rs35809043.">
    <original>F</original>
    <variation>V</variation>
    <location>
        <position position="211"/>
    </location>
</feature>
<feature type="sequence variant" id="VAR_047830" description="In dbSNP:rs11820003.">
    <original>V</original>
    <variation>I</variation>
    <location>
        <position position="287"/>
    </location>
</feature>
<feature type="sequence variant" id="VAR_020167" description="In dbSNP:rs8176786.">
    <original>R</original>
    <variation>W</variation>
    <location>
        <position position="354"/>
    </location>
</feature>
<feature type="sequence variant" id="VAR_035834" description="In a colorectal cancer sample; somatic mutation." evidence="7">
    <original>C</original>
    <variation>F</variation>
    <location>
        <position position="553"/>
    </location>
</feature>
<feature type="sequence conflict" description="In Ref. 7; AAB06946." evidence="13" ref="7">
    <original>N</original>
    <variation>D</variation>
    <location>
        <position position="383"/>
    </location>
</feature>
<feature type="sequence conflict" description="In Ref. 7; AAB06946." evidence="13" ref="7">
    <original>Y</original>
    <variation>H</variation>
    <location>
        <position position="573"/>
    </location>
</feature>
<feature type="sequence conflict" description="In Ref. 7; AAB06946." evidence="13" ref="7">
    <original>S</original>
    <variation>C</variation>
    <location>
        <position position="626"/>
    </location>
</feature>
<feature type="helix" evidence="15">
    <location>
        <begin position="395"/>
        <end position="397"/>
    </location>
</feature>
<feature type="strand" evidence="15">
    <location>
        <begin position="405"/>
        <end position="409"/>
    </location>
</feature>
<feature type="strand" evidence="15">
    <location>
        <begin position="411"/>
        <end position="418"/>
    </location>
</feature>
<feature type="strand" evidence="15">
    <location>
        <begin position="422"/>
        <end position="427"/>
    </location>
</feature>
<feature type="strand" evidence="15">
    <location>
        <begin position="431"/>
        <end position="434"/>
    </location>
</feature>
<feature type="strand" evidence="15">
    <location>
        <begin position="443"/>
        <end position="445"/>
    </location>
</feature>
<feature type="strand" evidence="15">
    <location>
        <begin position="449"/>
        <end position="454"/>
    </location>
</feature>
<feature type="strand" evidence="15">
    <location>
        <begin position="457"/>
        <end position="462"/>
    </location>
</feature>
<feature type="strand" evidence="15">
    <location>
        <begin position="467"/>
        <end position="470"/>
    </location>
</feature>
<feature type="strand" evidence="15">
    <location>
        <begin position="473"/>
        <end position="476"/>
    </location>
</feature>
<feature type="turn" evidence="15">
    <location>
        <begin position="479"/>
        <end position="483"/>
    </location>
</feature>
<feature type="strand" evidence="15">
    <location>
        <begin position="491"/>
        <end position="495"/>
    </location>
</feature>
<feature type="strand" evidence="15">
    <location>
        <begin position="497"/>
        <end position="504"/>
    </location>
</feature>
<feature type="strand" evidence="15">
    <location>
        <begin position="508"/>
        <end position="510"/>
    </location>
</feature>
<feature type="strand" evidence="15">
    <location>
        <begin position="512"/>
        <end position="517"/>
    </location>
</feature>
<evidence type="ECO:0000250" key="1">
    <source>
        <dbReference type="UniProtKB" id="Q62919"/>
    </source>
</evidence>
<evidence type="ECO:0000255" key="2"/>
<evidence type="ECO:0000255" key="3">
    <source>
        <dbReference type="PROSITE-ProRule" id="PRU00076"/>
    </source>
</evidence>
<evidence type="ECO:0000255" key="4">
    <source>
        <dbReference type="PROSITE-ProRule" id="PRU00220"/>
    </source>
</evidence>
<evidence type="ECO:0000269" key="5">
    <source>
    </source>
</evidence>
<evidence type="ECO:0000269" key="6">
    <source>
    </source>
</evidence>
<evidence type="ECO:0000269" key="7">
    <source>
    </source>
</evidence>
<evidence type="ECO:0000269" key="8">
    <source>
    </source>
</evidence>
<evidence type="ECO:0000269" key="9">
    <source>
    </source>
</evidence>
<evidence type="ECO:0000269" key="10">
    <source>
    </source>
</evidence>
<evidence type="ECO:0000269" key="11">
    <source ref="3"/>
</evidence>
<evidence type="ECO:0000303" key="12">
    <source>
    </source>
</evidence>
<evidence type="ECO:0000305" key="13"/>
<evidence type="ECO:0007744" key="14">
    <source>
        <dbReference type="PDB" id="6POL"/>
    </source>
</evidence>
<evidence type="ECO:0007829" key="15">
    <source>
        <dbReference type="PDB" id="6POL"/>
    </source>
</evidence>
<keyword id="KW-0002">3D-structure</keyword>
<keyword id="KW-0025">Alternative splicing</keyword>
<keyword id="KW-0106">Calcium</keyword>
<keyword id="KW-0963">Cytoplasm</keyword>
<keyword id="KW-0221">Differentiation</keyword>
<keyword id="KW-1015">Disulfide bond</keyword>
<keyword id="KW-0245">EGF-like domain</keyword>
<keyword id="KW-0325">Glycoprotein</keyword>
<keyword id="KW-0539">Nucleus</keyword>
<keyword id="KW-1267">Proteomics identification</keyword>
<keyword id="KW-1185">Reference proteome</keyword>
<keyword id="KW-0677">Repeat</keyword>
<keyword id="KW-0964">Secreted</keyword>
<keyword id="KW-0732">Signal</keyword>
<dbReference type="EMBL" id="D83017">
    <property type="protein sequence ID" value="BAA11680.1"/>
    <property type="molecule type" value="mRNA"/>
</dbReference>
<dbReference type="EMBL" id="AK313445">
    <property type="protein sequence ID" value="BAG36234.1"/>
    <property type="molecule type" value="mRNA"/>
</dbReference>
<dbReference type="EMBL" id="EU518937">
    <property type="protein sequence ID" value="ACB21040.1"/>
    <property type="molecule type" value="Genomic_DNA"/>
</dbReference>
<dbReference type="EMBL" id="AC010811">
    <property type="status" value="NOT_ANNOTATED_CDS"/>
    <property type="molecule type" value="Genomic_DNA"/>
</dbReference>
<dbReference type="EMBL" id="AC067794">
    <property type="status" value="NOT_ANNOTATED_CDS"/>
    <property type="molecule type" value="Genomic_DNA"/>
</dbReference>
<dbReference type="EMBL" id="AC069575">
    <property type="status" value="NOT_ANNOTATED_CDS"/>
    <property type="molecule type" value="Genomic_DNA"/>
</dbReference>
<dbReference type="EMBL" id="AC087279">
    <property type="status" value="NOT_ANNOTATED_CDS"/>
    <property type="molecule type" value="Genomic_DNA"/>
</dbReference>
<dbReference type="EMBL" id="AC090707">
    <property type="status" value="NOT_ANNOTATED_CDS"/>
    <property type="molecule type" value="Genomic_DNA"/>
</dbReference>
<dbReference type="EMBL" id="AC090857">
    <property type="status" value="NOT_ANNOTATED_CDS"/>
    <property type="molecule type" value="Genomic_DNA"/>
</dbReference>
<dbReference type="EMBL" id="AC099730">
    <property type="status" value="NOT_ANNOTATED_CDS"/>
    <property type="molecule type" value="Genomic_DNA"/>
</dbReference>
<dbReference type="EMBL" id="AC105190">
    <property type="status" value="NOT_ANNOTATED_CDS"/>
    <property type="molecule type" value="Genomic_DNA"/>
</dbReference>
<dbReference type="EMBL" id="AC108460">
    <property type="status" value="NOT_ANNOTATED_CDS"/>
    <property type="molecule type" value="Genomic_DNA"/>
</dbReference>
<dbReference type="EMBL" id="CH471064">
    <property type="protein sequence ID" value="EAW68328.1"/>
    <property type="molecule type" value="Genomic_DNA"/>
</dbReference>
<dbReference type="EMBL" id="BC069674">
    <property type="protein sequence ID" value="AAH69674.1"/>
    <property type="molecule type" value="mRNA"/>
</dbReference>
<dbReference type="EMBL" id="BC096100">
    <property type="protein sequence ID" value="AAH96100.1"/>
    <property type="molecule type" value="mRNA"/>
</dbReference>
<dbReference type="EMBL" id="BC096101">
    <property type="protein sequence ID" value="AAH96101.1"/>
    <property type="molecule type" value="mRNA"/>
</dbReference>
<dbReference type="EMBL" id="BC096102">
    <property type="protein sequence ID" value="AAH96102.1"/>
    <property type="molecule type" value="mRNA"/>
</dbReference>
<dbReference type="EMBL" id="U57523">
    <property type="protein sequence ID" value="AAB06946.1"/>
    <property type="status" value="ALT_FRAME"/>
    <property type="molecule type" value="mRNA"/>
</dbReference>
<dbReference type="CCDS" id="CCDS44555.1">
    <molecule id="Q92832-2"/>
</dbReference>
<dbReference type="CCDS" id="CCDS7855.1">
    <molecule id="Q92832-1"/>
</dbReference>
<dbReference type="RefSeq" id="NP_001275642.1">
    <property type="nucleotide sequence ID" value="NM_001288713.1"/>
</dbReference>
<dbReference type="RefSeq" id="NP_001275643.1">
    <property type="nucleotide sequence ID" value="NM_001288714.1"/>
</dbReference>
<dbReference type="RefSeq" id="NP_006148.2">
    <molecule id="Q92832-1"/>
    <property type="nucleotide sequence ID" value="NM_006157.5"/>
</dbReference>
<dbReference type="RefSeq" id="NP_963845.1">
    <molecule id="Q92832-2"/>
    <property type="nucleotide sequence ID" value="NM_201551.2"/>
</dbReference>
<dbReference type="PDB" id="6POL">
    <property type="method" value="X-ray"/>
    <property type="resolution" value="1.80 A"/>
    <property type="chains" value="B/D/F=390-517"/>
</dbReference>
<dbReference type="PDBsum" id="6POL"/>
<dbReference type="SMR" id="Q92832"/>
<dbReference type="BioGRID" id="110820">
    <property type="interactions" value="37"/>
</dbReference>
<dbReference type="FunCoup" id="Q92832">
    <property type="interactions" value="181"/>
</dbReference>
<dbReference type="IntAct" id="Q92832">
    <property type="interactions" value="51"/>
</dbReference>
<dbReference type="MINT" id="Q92832"/>
<dbReference type="STRING" id="9606.ENSP00000298925"/>
<dbReference type="GlyCosmos" id="Q92832">
    <property type="glycosylation" value="12 sites, No reported glycans"/>
</dbReference>
<dbReference type="GlyGen" id="Q92832">
    <property type="glycosylation" value="13 sites, 1 N-linked glycan (2 sites), 1 O-linked glycan (1 site)"/>
</dbReference>
<dbReference type="iPTMnet" id="Q92832"/>
<dbReference type="PhosphoSitePlus" id="Q92832"/>
<dbReference type="SwissPalm" id="Q92832"/>
<dbReference type="BioMuta" id="NELL1"/>
<dbReference type="DMDM" id="311033486"/>
<dbReference type="MassIVE" id="Q92832"/>
<dbReference type="PaxDb" id="9606-ENSP00000298925"/>
<dbReference type="PeptideAtlas" id="Q92832"/>
<dbReference type="ProteomicsDB" id="75509">
    <molecule id="Q92832-1"/>
</dbReference>
<dbReference type="ProteomicsDB" id="75510">
    <molecule id="Q92832-2"/>
</dbReference>
<dbReference type="Antibodypedia" id="25294">
    <property type="antibodies" value="155 antibodies from 25 providers"/>
</dbReference>
<dbReference type="DNASU" id="4745"/>
<dbReference type="Ensembl" id="ENST00000357134.10">
    <molecule id="Q92832-1"/>
    <property type="protein sequence ID" value="ENSP00000349654.5"/>
    <property type="gene ID" value="ENSG00000165973.19"/>
</dbReference>
<dbReference type="Ensembl" id="ENST00000532434.5">
    <molecule id="Q92832-2"/>
    <property type="protein sequence ID" value="ENSP00000437170.1"/>
    <property type="gene ID" value="ENSG00000165973.19"/>
</dbReference>
<dbReference type="GeneID" id="4745"/>
<dbReference type="KEGG" id="hsa:4745"/>
<dbReference type="MANE-Select" id="ENST00000357134.10">
    <property type="protein sequence ID" value="ENSP00000349654.5"/>
    <property type="RefSeq nucleotide sequence ID" value="NM_006157.5"/>
    <property type="RefSeq protein sequence ID" value="NP_006148.2"/>
</dbReference>
<dbReference type="UCSC" id="uc001mqe.5">
    <molecule id="Q92832-1"/>
    <property type="organism name" value="human"/>
</dbReference>
<dbReference type="AGR" id="HGNC:7750"/>
<dbReference type="CTD" id="4745"/>
<dbReference type="DisGeNET" id="4745"/>
<dbReference type="GeneCards" id="NELL1"/>
<dbReference type="HGNC" id="HGNC:7750">
    <property type="gene designation" value="NELL1"/>
</dbReference>
<dbReference type="HPA" id="ENSG00000165973">
    <property type="expression patterns" value="Tissue enhanced (brain, kidney)"/>
</dbReference>
<dbReference type="MalaCards" id="NELL1"/>
<dbReference type="MIM" id="602319">
    <property type="type" value="gene"/>
</dbReference>
<dbReference type="neXtProt" id="NX_Q92832"/>
<dbReference type="OpenTargets" id="ENSG00000165973"/>
<dbReference type="PharmGKB" id="PA31552"/>
<dbReference type="VEuPathDB" id="HostDB:ENSG00000165973"/>
<dbReference type="eggNOG" id="KOG1217">
    <property type="taxonomic scope" value="Eukaryota"/>
</dbReference>
<dbReference type="GeneTree" id="ENSGT00810000125439"/>
<dbReference type="HOGENOM" id="CLU_006887_0_0_1"/>
<dbReference type="InParanoid" id="Q92832"/>
<dbReference type="OMA" id="ATCECKT"/>
<dbReference type="OrthoDB" id="6516201at2759"/>
<dbReference type="PAN-GO" id="Q92832">
    <property type="GO annotations" value="3 GO annotations based on evolutionary models"/>
</dbReference>
<dbReference type="PhylomeDB" id="Q92832"/>
<dbReference type="TreeFam" id="TF323325"/>
<dbReference type="PathwayCommons" id="Q92832"/>
<dbReference type="SignaLink" id="Q92832"/>
<dbReference type="BioGRID-ORCS" id="4745">
    <property type="hits" value="15 hits in 1139 CRISPR screens"/>
</dbReference>
<dbReference type="ChiTaRS" id="NELL1">
    <property type="organism name" value="human"/>
</dbReference>
<dbReference type="GeneWiki" id="NELL1"/>
<dbReference type="GenomeRNAi" id="4745"/>
<dbReference type="Pharos" id="Q92832">
    <property type="development level" value="Tbio"/>
</dbReference>
<dbReference type="PRO" id="PR:Q92832"/>
<dbReference type="Proteomes" id="UP000005640">
    <property type="component" value="Chromosome 11"/>
</dbReference>
<dbReference type="RNAct" id="Q92832">
    <property type="molecule type" value="protein"/>
</dbReference>
<dbReference type="Bgee" id="ENSG00000165973">
    <property type="expression patterns" value="Expressed in endothelial cell and 139 other cell types or tissues"/>
</dbReference>
<dbReference type="ExpressionAtlas" id="Q92832">
    <property type="expression patterns" value="baseline and differential"/>
</dbReference>
<dbReference type="GO" id="GO:0005737">
    <property type="term" value="C:cytoplasm"/>
    <property type="evidence" value="ECO:0000314"/>
    <property type="project" value="UniProtKB"/>
</dbReference>
<dbReference type="GO" id="GO:0005615">
    <property type="term" value="C:extracellular space"/>
    <property type="evidence" value="ECO:0000318"/>
    <property type="project" value="GO_Central"/>
</dbReference>
<dbReference type="GO" id="GO:0005635">
    <property type="term" value="C:nuclear envelope"/>
    <property type="evidence" value="ECO:0000314"/>
    <property type="project" value="UniProtKB"/>
</dbReference>
<dbReference type="GO" id="GO:0048471">
    <property type="term" value="C:perinuclear region of cytoplasm"/>
    <property type="evidence" value="ECO:0000314"/>
    <property type="project" value="UniProtKB"/>
</dbReference>
<dbReference type="GO" id="GO:0005509">
    <property type="term" value="F:calcium ion binding"/>
    <property type="evidence" value="ECO:0007669"/>
    <property type="project" value="InterPro"/>
</dbReference>
<dbReference type="GO" id="GO:0008201">
    <property type="term" value="F:heparin binding"/>
    <property type="evidence" value="ECO:0000318"/>
    <property type="project" value="GO_Central"/>
</dbReference>
<dbReference type="GO" id="GO:0005080">
    <property type="term" value="F:protein kinase C binding"/>
    <property type="evidence" value="ECO:0000318"/>
    <property type="project" value="GO_Central"/>
</dbReference>
<dbReference type="GO" id="GO:0030154">
    <property type="term" value="P:cell differentiation"/>
    <property type="evidence" value="ECO:0007669"/>
    <property type="project" value="UniProtKB-KW"/>
</dbReference>
<dbReference type="GO" id="GO:0033689">
    <property type="term" value="P:negative regulation of osteoblast proliferation"/>
    <property type="evidence" value="ECO:0000314"/>
    <property type="project" value="UniProtKB"/>
</dbReference>
<dbReference type="GO" id="GO:0042177">
    <property type="term" value="P:negative regulation of protein catabolic process"/>
    <property type="evidence" value="ECO:0000314"/>
    <property type="project" value="UniProtKB"/>
</dbReference>
<dbReference type="GO" id="GO:0007399">
    <property type="term" value="P:nervous system development"/>
    <property type="evidence" value="ECO:0000304"/>
    <property type="project" value="ProtInc"/>
</dbReference>
<dbReference type="GO" id="GO:0030501">
    <property type="term" value="P:positive regulation of bone mineralization"/>
    <property type="evidence" value="ECO:0000314"/>
    <property type="project" value="UniProtKB"/>
</dbReference>
<dbReference type="GO" id="GO:0045778">
    <property type="term" value="P:positive regulation of ossification"/>
    <property type="evidence" value="ECO:0000318"/>
    <property type="project" value="GO_Central"/>
</dbReference>
<dbReference type="GO" id="GO:0045669">
    <property type="term" value="P:positive regulation of osteoblast differentiation"/>
    <property type="evidence" value="ECO:0000314"/>
    <property type="project" value="UniProtKB"/>
</dbReference>
<dbReference type="GO" id="GO:0010468">
    <property type="term" value="P:regulation of gene expression"/>
    <property type="evidence" value="ECO:0000314"/>
    <property type="project" value="UniProtKB"/>
</dbReference>
<dbReference type="GO" id="GO:0045667">
    <property type="term" value="P:regulation of osteoblast differentiation"/>
    <property type="evidence" value="ECO:0000318"/>
    <property type="project" value="GO_Central"/>
</dbReference>
<dbReference type="CDD" id="cd00054">
    <property type="entry name" value="EGF_CA"/>
    <property type="match status" value="4"/>
</dbReference>
<dbReference type="CDD" id="cd00110">
    <property type="entry name" value="LamG"/>
    <property type="match status" value="1"/>
</dbReference>
<dbReference type="FunFam" id="2.10.25.10:FF:000121">
    <property type="entry name" value="Neural EGFL like 2"/>
    <property type="match status" value="1"/>
</dbReference>
<dbReference type="FunFam" id="2.10.25.10:FF:000120">
    <property type="entry name" value="Protein kinase C-binding protein NELL1"/>
    <property type="match status" value="1"/>
</dbReference>
<dbReference type="FunFam" id="2.10.25.10:FF:000211">
    <property type="entry name" value="Protein kinase C-binding protein NELL1"/>
    <property type="match status" value="1"/>
</dbReference>
<dbReference type="FunFam" id="2.10.25.10:FF:000221">
    <property type="entry name" value="Protein kinase C-binding protein NELL1"/>
    <property type="match status" value="1"/>
</dbReference>
<dbReference type="FunFam" id="2.60.120.200:FF:000015">
    <property type="entry name" value="protein kinase C-binding protein NELL1"/>
    <property type="match status" value="1"/>
</dbReference>
<dbReference type="FunFam" id="2.10.25.10:FF:000102">
    <property type="entry name" value="Protein kinase C-binding protein NELL2"/>
    <property type="match status" value="1"/>
</dbReference>
<dbReference type="FunFam" id="2.10.25.10:FF:000111">
    <property type="entry name" value="Protein kinase C-binding protein NELL2"/>
    <property type="match status" value="1"/>
</dbReference>
<dbReference type="FunFam" id="2.10.70.10:FF:000023">
    <property type="entry name" value="protein kinase C-binding protein NELL2"/>
    <property type="match status" value="1"/>
</dbReference>
<dbReference type="Gene3D" id="2.60.120.200">
    <property type="match status" value="1"/>
</dbReference>
<dbReference type="Gene3D" id="6.20.200.20">
    <property type="match status" value="2"/>
</dbReference>
<dbReference type="Gene3D" id="2.10.70.10">
    <property type="entry name" value="Complement Module, domain 1"/>
    <property type="match status" value="1"/>
</dbReference>
<dbReference type="Gene3D" id="2.10.25.10">
    <property type="entry name" value="Laminin"/>
    <property type="match status" value="6"/>
</dbReference>
<dbReference type="InterPro" id="IPR013320">
    <property type="entry name" value="ConA-like_dom_sf"/>
</dbReference>
<dbReference type="InterPro" id="IPR001881">
    <property type="entry name" value="EGF-like_Ca-bd_dom"/>
</dbReference>
<dbReference type="InterPro" id="IPR000742">
    <property type="entry name" value="EGF-like_dom"/>
</dbReference>
<dbReference type="InterPro" id="IPR000152">
    <property type="entry name" value="EGF-type_Asp/Asn_hydroxyl_site"/>
</dbReference>
<dbReference type="InterPro" id="IPR018097">
    <property type="entry name" value="EGF_Ca-bd_CS"/>
</dbReference>
<dbReference type="InterPro" id="IPR024731">
    <property type="entry name" value="EGF_dom"/>
</dbReference>
<dbReference type="InterPro" id="IPR009030">
    <property type="entry name" value="Growth_fac_rcpt_cys_sf"/>
</dbReference>
<dbReference type="InterPro" id="IPR001791">
    <property type="entry name" value="Laminin_G"/>
</dbReference>
<dbReference type="InterPro" id="IPR049883">
    <property type="entry name" value="NOTCH1_EGF-like"/>
</dbReference>
<dbReference type="InterPro" id="IPR051586">
    <property type="entry name" value="PKC-binding_NELL"/>
</dbReference>
<dbReference type="InterPro" id="IPR048287">
    <property type="entry name" value="TSPN-like_N"/>
</dbReference>
<dbReference type="InterPro" id="IPR001007">
    <property type="entry name" value="VWF_dom"/>
</dbReference>
<dbReference type="PANTHER" id="PTHR24042">
    <property type="entry name" value="NEL HOMOLOG"/>
    <property type="match status" value="1"/>
</dbReference>
<dbReference type="PANTHER" id="PTHR24042:SF2">
    <property type="entry name" value="PROTEIN KINASE C-BINDING PROTEIN NELL1"/>
    <property type="match status" value="1"/>
</dbReference>
<dbReference type="Pfam" id="PF12947">
    <property type="entry name" value="EGF_3"/>
    <property type="match status" value="1"/>
</dbReference>
<dbReference type="Pfam" id="PF07645">
    <property type="entry name" value="EGF_CA"/>
    <property type="match status" value="3"/>
</dbReference>
<dbReference type="Pfam" id="PF02210">
    <property type="entry name" value="Laminin_G_2"/>
    <property type="match status" value="1"/>
</dbReference>
<dbReference type="Pfam" id="PF00093">
    <property type="entry name" value="VWC"/>
    <property type="match status" value="2"/>
</dbReference>
<dbReference type="SMART" id="SM00181">
    <property type="entry name" value="EGF"/>
    <property type="match status" value="6"/>
</dbReference>
<dbReference type="SMART" id="SM00179">
    <property type="entry name" value="EGF_CA"/>
    <property type="match status" value="5"/>
</dbReference>
<dbReference type="SMART" id="SM00282">
    <property type="entry name" value="LamG"/>
    <property type="match status" value="1"/>
</dbReference>
<dbReference type="SMART" id="SM00210">
    <property type="entry name" value="TSPN"/>
    <property type="match status" value="1"/>
</dbReference>
<dbReference type="SMART" id="SM00214">
    <property type="entry name" value="VWC"/>
    <property type="match status" value="4"/>
</dbReference>
<dbReference type="SMART" id="SM00215">
    <property type="entry name" value="VWC_out"/>
    <property type="match status" value="2"/>
</dbReference>
<dbReference type="SUPFAM" id="SSF49899">
    <property type="entry name" value="Concanavalin A-like lectins/glucanases"/>
    <property type="match status" value="1"/>
</dbReference>
<dbReference type="SUPFAM" id="SSF57196">
    <property type="entry name" value="EGF/Laminin"/>
    <property type="match status" value="2"/>
</dbReference>
<dbReference type="SUPFAM" id="SSF57603">
    <property type="entry name" value="FnI-like domain"/>
    <property type="match status" value="3"/>
</dbReference>
<dbReference type="SUPFAM" id="SSF57184">
    <property type="entry name" value="Growth factor receptor domain"/>
    <property type="match status" value="1"/>
</dbReference>
<dbReference type="PROSITE" id="PS00010">
    <property type="entry name" value="ASX_HYDROXYL"/>
    <property type="match status" value="3"/>
</dbReference>
<dbReference type="PROSITE" id="PS00022">
    <property type="entry name" value="EGF_1"/>
    <property type="match status" value="1"/>
</dbReference>
<dbReference type="PROSITE" id="PS01186">
    <property type="entry name" value="EGF_2"/>
    <property type="match status" value="3"/>
</dbReference>
<dbReference type="PROSITE" id="PS50026">
    <property type="entry name" value="EGF_3"/>
    <property type="match status" value="5"/>
</dbReference>
<dbReference type="PROSITE" id="PS01187">
    <property type="entry name" value="EGF_CA"/>
    <property type="match status" value="3"/>
</dbReference>
<dbReference type="PROSITE" id="PS01208">
    <property type="entry name" value="VWFC_1"/>
    <property type="match status" value="2"/>
</dbReference>
<dbReference type="PROSITE" id="PS50184">
    <property type="entry name" value="VWFC_2"/>
    <property type="match status" value="2"/>
</dbReference>
<proteinExistence type="evidence at protein level"/>
<accession>Q92832</accession>
<accession>B2CKC1</accession>
<accession>Q4VB90</accession>
<accession>Q4VB91</accession>
<accession>Q6NSY8</accession>
<accession>Q9Y472</accession>
<sequence>MPMDLILVVWFCVCTARTVVGFGMDPDLQMDIVTELDLVNTTLGVAQVSGMHNASKAFLFQDIEREIHAAPHVSEKLIQLFRNKSEFTILATVQQKPSTSGVILSIRELEHSYFELESSGLRDEIRYHYIHNGKPRTEALPYRMADGQWHKVALSVSASHLLLHVDCNRIYERVIDPPDTNLPPGINLWLGQRNQKHGLFKGIIQDGKIIFMPNGYITQCPNLNHTCPTCSDFLSLVQGIMDLQELLAKMTAKLNYAETRLSQLENCHCEKTCQVSGLLYRDQDSWVDGDHCRNCTCKSGAVECRRMSCPPLNCSPDSLPVHIAGQCCKVCRPKCIYGGKVLAEGQRILTKSCRECRGGVLVKITEMCPPLNCSEKDHILPENQCCRVCRGHNFCAEGPKCGENSECKNWNTKATCECKSGYISVQGDSAYCEDIDECAAKMHYCHANTVCVNLPGLYRCDCVPGYIRVDDFSCTEHDECGSGQHNCDENAICTNTVQGHSCTCKPGYVGNGTICRAFCEEGCRYGGTCVAPNKCVCPSGFTGSHCEKDIDECSEGIIECHNHSRCVNLPGWYHCECRSGFHDDGTYSLSGESCIDIDECALRTHTCWNDSACINLAGGFDCLCPSGPSCSGDCPHEGGLKHNGQVWTLKEDRCSVCSCKDGKIFCRRTACDCQNPSADLFCCPECDTRVTSQCLDQNGHKLYRSGDNWTHSCQQCRCLEGEVDCWPLTCPNLSCEYTAILEGECCPRCVSDPCLADNITYDIRKTCLDSYGVSRLSGSVWTMAGSPCTTCKCKNGRVCCSVDFECLQNN</sequence>
<organism>
    <name type="scientific">Homo sapiens</name>
    <name type="common">Human</name>
    <dbReference type="NCBI Taxonomy" id="9606"/>
    <lineage>
        <taxon>Eukaryota</taxon>
        <taxon>Metazoa</taxon>
        <taxon>Chordata</taxon>
        <taxon>Craniata</taxon>
        <taxon>Vertebrata</taxon>
        <taxon>Euteleostomi</taxon>
        <taxon>Mammalia</taxon>
        <taxon>Eutheria</taxon>
        <taxon>Euarchontoglires</taxon>
        <taxon>Primates</taxon>
        <taxon>Haplorrhini</taxon>
        <taxon>Catarrhini</taxon>
        <taxon>Hominidae</taxon>
        <taxon>Homo</taxon>
    </lineage>
</organism>